<evidence type="ECO:0000250" key="1">
    <source>
        <dbReference type="UniProtKB" id="Q07914"/>
    </source>
</evidence>
<evidence type="ECO:0000250" key="2">
    <source>
        <dbReference type="UniProtKB" id="Q96DA6"/>
    </source>
</evidence>
<evidence type="ECO:0000250" key="3">
    <source>
        <dbReference type="UniProtKB" id="Q9CQV7"/>
    </source>
</evidence>
<evidence type="ECO:0000255" key="4"/>
<evidence type="ECO:0000255" key="5">
    <source>
        <dbReference type="PROSITE-ProRule" id="PRU00286"/>
    </source>
</evidence>
<evidence type="ECO:0000305" key="6"/>
<comment type="function">
    <text evidence="1 3">Mitochondrial co-chaperone which forms a complex with prohibitins to regulate cardiolipin remodeling (By similarity). May be a component of the PAM complex, a complex required for the translocation of transit peptide-containing proteins from the inner membrane into the mitochondrial matrix in an ATP-dependent manner. May act as a co-chaperone that stimulate the ATP-dependent activity (By similarity).</text>
</comment>
<comment type="subunit">
    <text evidence="1 3">Interacts with PHB2; the interaction associates DNAJC19 with the prohibitin complex. Interacts with TIMM16/PAM16 (By similarity). May be a component of the PAM complex at least composed of a mitochondrial HSP70 protein, GRPEL1 or GRPEL2, TIMM44, TIMM16/PAM16 and TIMM14/DNAJC19 (By similarity).</text>
</comment>
<comment type="subcellular location">
    <subcellularLocation>
        <location evidence="3">Mitochondrion inner membrane</location>
        <topology evidence="4">Single-pass membrane protein</topology>
        <orientation evidence="3">Matrix side</orientation>
    </subcellularLocation>
</comment>
<comment type="similarity">
    <text evidence="6">Belongs to the TIM14 family.</text>
</comment>
<sequence>MASTVVAVGLTIAAAGFAGRYVLQAMKHMEPQVKQVFQSLPKSAFSGGYYRGGFEPKMTKREAALILGVSPTANKGKIRDAHRRIMLLNHPDKGGSPYIAAKINEAKDLLEGQAKK</sequence>
<accession>Q5RF34</accession>
<feature type="initiator methionine" description="Removed" evidence="2">
    <location>
        <position position="1"/>
    </location>
</feature>
<feature type="chain" id="PRO_0000071102" description="Mitochondrial import inner membrane translocase subunit TIM14">
    <location>
        <begin position="2"/>
        <end position="116"/>
    </location>
</feature>
<feature type="topological domain" description="Mitochondrial intermembrane" evidence="4">
    <location>
        <begin position="2"/>
        <end position="3"/>
    </location>
</feature>
<feature type="transmembrane region" description="Helical" evidence="4">
    <location>
        <begin position="4"/>
        <end position="24"/>
    </location>
</feature>
<feature type="topological domain" description="Mitochondrial matrix" evidence="4">
    <location>
        <begin position="25"/>
        <end position="116"/>
    </location>
</feature>
<feature type="domain" description="J" evidence="5">
    <location>
        <begin position="62"/>
        <end position="116"/>
    </location>
</feature>
<feature type="modified residue" description="N-acetylalanine" evidence="2">
    <location>
        <position position="2"/>
    </location>
</feature>
<feature type="modified residue" description="Phosphoserine" evidence="2">
    <location>
        <position position="39"/>
    </location>
</feature>
<feature type="modified residue" description="Phosphoserine" evidence="2">
    <location>
        <position position="70"/>
    </location>
</feature>
<gene>
    <name type="primary">DNAJC19</name>
    <name type="synonym">TIM14</name>
    <name type="synonym">TIMM14</name>
</gene>
<reference key="1">
    <citation type="submission" date="2004-11" db="EMBL/GenBank/DDBJ databases">
        <authorList>
            <consortium name="The German cDNA consortium"/>
        </authorList>
    </citation>
    <scope>NUCLEOTIDE SEQUENCE [LARGE SCALE MRNA]</scope>
    <source>
        <tissue>Kidney</tissue>
    </source>
</reference>
<organism>
    <name type="scientific">Pongo abelii</name>
    <name type="common">Sumatran orangutan</name>
    <name type="synonym">Pongo pygmaeus abelii</name>
    <dbReference type="NCBI Taxonomy" id="9601"/>
    <lineage>
        <taxon>Eukaryota</taxon>
        <taxon>Metazoa</taxon>
        <taxon>Chordata</taxon>
        <taxon>Craniata</taxon>
        <taxon>Vertebrata</taxon>
        <taxon>Euteleostomi</taxon>
        <taxon>Mammalia</taxon>
        <taxon>Eutheria</taxon>
        <taxon>Euarchontoglires</taxon>
        <taxon>Primates</taxon>
        <taxon>Haplorrhini</taxon>
        <taxon>Catarrhini</taxon>
        <taxon>Hominidae</taxon>
        <taxon>Pongo</taxon>
    </lineage>
</organism>
<keyword id="KW-0007">Acetylation</keyword>
<keyword id="KW-0143">Chaperone</keyword>
<keyword id="KW-0472">Membrane</keyword>
<keyword id="KW-0496">Mitochondrion</keyword>
<keyword id="KW-0999">Mitochondrion inner membrane</keyword>
<keyword id="KW-0597">Phosphoprotein</keyword>
<keyword id="KW-0653">Protein transport</keyword>
<keyword id="KW-1185">Reference proteome</keyword>
<keyword id="KW-0811">Translocation</keyword>
<keyword id="KW-0812">Transmembrane</keyword>
<keyword id="KW-1133">Transmembrane helix</keyword>
<keyword id="KW-0813">Transport</keyword>
<protein>
    <recommendedName>
        <fullName>Mitochondrial import inner membrane translocase subunit TIM14</fullName>
    </recommendedName>
    <alternativeName>
        <fullName>DnaJ homolog subfamily C member 19</fullName>
    </alternativeName>
</protein>
<proteinExistence type="inferred from homology"/>
<name>TIM14_PONAB</name>
<dbReference type="EMBL" id="CR857327">
    <property type="protein sequence ID" value="CAH89623.1"/>
    <property type="molecule type" value="mRNA"/>
</dbReference>
<dbReference type="RefSeq" id="NP_001124727.1">
    <property type="nucleotide sequence ID" value="NM_001131255.1"/>
</dbReference>
<dbReference type="SMR" id="Q5RF34"/>
<dbReference type="FunCoup" id="Q5RF34">
    <property type="interactions" value="1866"/>
</dbReference>
<dbReference type="STRING" id="9601.ENSPPYP00000016025"/>
<dbReference type="Ensembl" id="ENSPPYT00000016668.2">
    <property type="protein sequence ID" value="ENSPPYP00000016025.1"/>
    <property type="gene ID" value="ENSPPYG00000014328.2"/>
</dbReference>
<dbReference type="GeneID" id="100171576"/>
<dbReference type="KEGG" id="pon:100171576"/>
<dbReference type="CTD" id="131118"/>
<dbReference type="eggNOG" id="KOG0723">
    <property type="taxonomic scope" value="Eukaryota"/>
</dbReference>
<dbReference type="GeneTree" id="ENSGT00940000154384"/>
<dbReference type="HOGENOM" id="CLU_017633_13_3_1"/>
<dbReference type="InParanoid" id="Q5RF34"/>
<dbReference type="OMA" id="RYLIHAW"/>
<dbReference type="OrthoDB" id="240298at2759"/>
<dbReference type="TreeFam" id="TF320584"/>
<dbReference type="Proteomes" id="UP000001595">
    <property type="component" value="Chromosome 3"/>
</dbReference>
<dbReference type="GO" id="GO:0098800">
    <property type="term" value="C:inner mitochondrial membrane protein complex"/>
    <property type="evidence" value="ECO:0000250"/>
    <property type="project" value="UniProtKB"/>
</dbReference>
<dbReference type="GO" id="GO:0099617">
    <property type="term" value="C:matrix side of mitochondrial inner membrane"/>
    <property type="evidence" value="ECO:0000250"/>
    <property type="project" value="UniProtKB"/>
</dbReference>
<dbReference type="GO" id="GO:0001405">
    <property type="term" value="C:PAM complex, Tim23 associated import motor"/>
    <property type="evidence" value="ECO:0007669"/>
    <property type="project" value="TreeGrafter"/>
</dbReference>
<dbReference type="GO" id="GO:0001671">
    <property type="term" value="F:ATPase activator activity"/>
    <property type="evidence" value="ECO:0007669"/>
    <property type="project" value="TreeGrafter"/>
</dbReference>
<dbReference type="GO" id="GO:0048806">
    <property type="term" value="P:genitalia development"/>
    <property type="evidence" value="ECO:0007669"/>
    <property type="project" value="Ensembl"/>
</dbReference>
<dbReference type="GO" id="GO:0030150">
    <property type="term" value="P:protein import into mitochondrial matrix"/>
    <property type="evidence" value="ECO:0007669"/>
    <property type="project" value="TreeGrafter"/>
</dbReference>
<dbReference type="GO" id="GO:1900208">
    <property type="term" value="P:regulation of cardiolipin metabolic process"/>
    <property type="evidence" value="ECO:0000250"/>
    <property type="project" value="UniProtKB"/>
</dbReference>
<dbReference type="GO" id="GO:0007601">
    <property type="term" value="P:visual perception"/>
    <property type="evidence" value="ECO:0007669"/>
    <property type="project" value="Ensembl"/>
</dbReference>
<dbReference type="CDD" id="cd06257">
    <property type="entry name" value="DnaJ"/>
    <property type="match status" value="1"/>
</dbReference>
<dbReference type="FunFam" id="1.10.287.110:FF:000001">
    <property type="entry name" value="Import inner membrane translocase subunit tim14"/>
    <property type="match status" value="1"/>
</dbReference>
<dbReference type="Gene3D" id="1.10.287.110">
    <property type="entry name" value="DnaJ domain"/>
    <property type="match status" value="1"/>
</dbReference>
<dbReference type="InterPro" id="IPR001623">
    <property type="entry name" value="DnaJ_domain"/>
</dbReference>
<dbReference type="InterPro" id="IPR036869">
    <property type="entry name" value="J_dom_sf"/>
</dbReference>
<dbReference type="PANTHER" id="PTHR12763">
    <property type="match status" value="1"/>
</dbReference>
<dbReference type="PANTHER" id="PTHR12763:SF56">
    <property type="entry name" value="MITOCHONDRIAL IMPORT INNER MEMBRANE TRANSLOCASE SUBUNIT TIM14"/>
    <property type="match status" value="1"/>
</dbReference>
<dbReference type="Pfam" id="PF00226">
    <property type="entry name" value="DnaJ"/>
    <property type="match status" value="1"/>
</dbReference>
<dbReference type="SMART" id="SM00271">
    <property type="entry name" value="DnaJ"/>
    <property type="match status" value="1"/>
</dbReference>
<dbReference type="SUPFAM" id="SSF46565">
    <property type="entry name" value="Chaperone J-domain"/>
    <property type="match status" value="1"/>
</dbReference>
<dbReference type="PROSITE" id="PS50076">
    <property type="entry name" value="DNAJ_2"/>
    <property type="match status" value="1"/>
</dbReference>